<keyword id="KW-0002">3D-structure</keyword>
<keyword id="KW-0238">DNA-binding</keyword>
<keyword id="KW-0479">Metal-binding</keyword>
<keyword id="KW-0539">Nucleus</keyword>
<keyword id="KW-1267">Proteomics identification</keyword>
<keyword id="KW-1185">Reference proteome</keyword>
<keyword id="KW-0677">Repeat</keyword>
<keyword id="KW-0804">Transcription</keyword>
<keyword id="KW-0805">Transcription regulation</keyword>
<keyword id="KW-0862">Zinc</keyword>
<keyword id="KW-0863">Zinc-finger</keyword>
<dbReference type="EMBL" id="AK025844">
    <property type="protein sequence ID" value="BAB15257.1"/>
    <property type="molecule type" value="mRNA"/>
</dbReference>
<dbReference type="EMBL" id="AL358933">
    <property type="status" value="NOT_ANNOTATED_CDS"/>
    <property type="molecule type" value="Genomic_DNA"/>
</dbReference>
<dbReference type="EMBL" id="BC004255">
    <property type="protein sequence ID" value="AAH04255.1"/>
    <property type="molecule type" value="mRNA"/>
</dbReference>
<dbReference type="CCDS" id="CCDS4644.1"/>
<dbReference type="RefSeq" id="NP_001307484.1">
    <property type="nucleotide sequence ID" value="NM_001320555.2"/>
</dbReference>
<dbReference type="RefSeq" id="NP_001307485.1">
    <property type="nucleotide sequence ID" value="NM_001320556.1"/>
</dbReference>
<dbReference type="RefSeq" id="NP_001307486.1">
    <property type="nucleotide sequence ID" value="NM_001320557.1"/>
</dbReference>
<dbReference type="RefSeq" id="NP_079507.1">
    <property type="nucleotide sequence ID" value="NM_025231.3"/>
</dbReference>
<dbReference type="RefSeq" id="XP_016866813.1">
    <property type="nucleotide sequence ID" value="XM_017011324.2"/>
</dbReference>
<dbReference type="RefSeq" id="XP_054212444.1">
    <property type="nucleotide sequence ID" value="XM_054356469.1"/>
</dbReference>
<dbReference type="PDB" id="2COT">
    <property type="method" value="NMR"/>
    <property type="chains" value="A=225-288"/>
</dbReference>
<dbReference type="PDBsum" id="2COT"/>
<dbReference type="SMR" id="Q9H4T2"/>
<dbReference type="BioGRID" id="123252">
    <property type="interactions" value="13"/>
</dbReference>
<dbReference type="FunCoup" id="Q9H4T2">
    <property type="interactions" value="48"/>
</dbReference>
<dbReference type="IntAct" id="Q9H4T2">
    <property type="interactions" value="13"/>
</dbReference>
<dbReference type="STRING" id="9606.ENSP00000366527"/>
<dbReference type="iPTMnet" id="Q9H4T2"/>
<dbReference type="PhosphoSitePlus" id="Q9H4T2"/>
<dbReference type="BioMuta" id="ZSCAN16"/>
<dbReference type="DMDM" id="20178228"/>
<dbReference type="jPOST" id="Q9H4T2"/>
<dbReference type="MassIVE" id="Q9H4T2"/>
<dbReference type="PaxDb" id="9606-ENSP00000366527"/>
<dbReference type="PeptideAtlas" id="Q9H4T2"/>
<dbReference type="ProteomicsDB" id="80875"/>
<dbReference type="Antibodypedia" id="1844">
    <property type="antibodies" value="193 antibodies from 27 providers"/>
</dbReference>
<dbReference type="DNASU" id="80345"/>
<dbReference type="Ensembl" id="ENST00000340487.5">
    <property type="protein sequence ID" value="ENSP00000366527.3"/>
    <property type="gene ID" value="ENSG00000196812.6"/>
</dbReference>
<dbReference type="Ensembl" id="ENST00000685330.1">
    <property type="protein sequence ID" value="ENSP00000510203.1"/>
    <property type="gene ID" value="ENSG00000196812.6"/>
</dbReference>
<dbReference type="GeneID" id="80345"/>
<dbReference type="KEGG" id="hsa:80345"/>
<dbReference type="MANE-Select" id="ENST00000340487.5">
    <property type="protein sequence ID" value="ENSP00000366527.3"/>
    <property type="RefSeq nucleotide sequence ID" value="NM_025231.3"/>
    <property type="RefSeq protein sequence ID" value="NP_079507.1"/>
</dbReference>
<dbReference type="UCSC" id="uc003nkm.4">
    <property type="organism name" value="human"/>
</dbReference>
<dbReference type="AGR" id="HGNC:20813"/>
<dbReference type="CTD" id="80345"/>
<dbReference type="DisGeNET" id="80345"/>
<dbReference type="GeneCards" id="ZSCAN16"/>
<dbReference type="HGNC" id="HGNC:20813">
    <property type="gene designation" value="ZSCAN16"/>
</dbReference>
<dbReference type="HPA" id="ENSG00000196812">
    <property type="expression patterns" value="Low tissue specificity"/>
</dbReference>
<dbReference type="MIM" id="618544">
    <property type="type" value="gene"/>
</dbReference>
<dbReference type="neXtProt" id="NX_Q9H4T2"/>
<dbReference type="OpenTargets" id="ENSG00000196812"/>
<dbReference type="PharmGKB" id="PA162410958"/>
<dbReference type="VEuPathDB" id="HostDB:ENSG00000196812"/>
<dbReference type="eggNOG" id="KOG1721">
    <property type="taxonomic scope" value="Eukaryota"/>
</dbReference>
<dbReference type="GeneTree" id="ENSGT00940000163165"/>
<dbReference type="HOGENOM" id="CLU_002678_49_3_1"/>
<dbReference type="InParanoid" id="Q9H4T2"/>
<dbReference type="OMA" id="QKCSPHR"/>
<dbReference type="OrthoDB" id="9439903at2759"/>
<dbReference type="PAN-GO" id="Q9H4T2">
    <property type="GO annotations" value="3 GO annotations based on evolutionary models"/>
</dbReference>
<dbReference type="PhylomeDB" id="Q9H4T2"/>
<dbReference type="TreeFam" id="TF338304"/>
<dbReference type="PathwayCommons" id="Q9H4T2"/>
<dbReference type="SignaLink" id="Q9H4T2"/>
<dbReference type="BioGRID-ORCS" id="80345">
    <property type="hits" value="6 hits in 1168 CRISPR screens"/>
</dbReference>
<dbReference type="EvolutionaryTrace" id="Q9H4T2"/>
<dbReference type="GenomeRNAi" id="80345"/>
<dbReference type="Pharos" id="Q9H4T2">
    <property type="development level" value="Tbio"/>
</dbReference>
<dbReference type="PRO" id="PR:Q9H4T2"/>
<dbReference type="Proteomes" id="UP000005640">
    <property type="component" value="Chromosome 6"/>
</dbReference>
<dbReference type="RNAct" id="Q9H4T2">
    <property type="molecule type" value="protein"/>
</dbReference>
<dbReference type="Bgee" id="ENSG00000196812">
    <property type="expression patterns" value="Expressed in male germ line stem cell (sensu Vertebrata) in testis and 133 other cell types or tissues"/>
</dbReference>
<dbReference type="GO" id="GO:0005634">
    <property type="term" value="C:nucleus"/>
    <property type="evidence" value="ECO:0007669"/>
    <property type="project" value="UniProtKB-SubCell"/>
</dbReference>
<dbReference type="GO" id="GO:0000981">
    <property type="term" value="F:DNA-binding transcription factor activity, RNA polymerase II-specific"/>
    <property type="evidence" value="ECO:0000318"/>
    <property type="project" value="GO_Central"/>
</dbReference>
<dbReference type="GO" id="GO:0000978">
    <property type="term" value="F:RNA polymerase II cis-regulatory region sequence-specific DNA binding"/>
    <property type="evidence" value="ECO:0000318"/>
    <property type="project" value="GO_Central"/>
</dbReference>
<dbReference type="GO" id="GO:1990837">
    <property type="term" value="F:sequence-specific double-stranded DNA binding"/>
    <property type="evidence" value="ECO:0000314"/>
    <property type="project" value="ARUK-UCL"/>
</dbReference>
<dbReference type="GO" id="GO:0008270">
    <property type="term" value="F:zinc ion binding"/>
    <property type="evidence" value="ECO:0007669"/>
    <property type="project" value="UniProtKB-KW"/>
</dbReference>
<dbReference type="GO" id="GO:0006357">
    <property type="term" value="P:regulation of transcription by RNA polymerase II"/>
    <property type="evidence" value="ECO:0000318"/>
    <property type="project" value="GO_Central"/>
</dbReference>
<dbReference type="CDD" id="cd07936">
    <property type="entry name" value="SCAN"/>
    <property type="match status" value="1"/>
</dbReference>
<dbReference type="FunFam" id="3.30.160.60:FF:001370">
    <property type="entry name" value="Zinc finger protein"/>
    <property type="match status" value="1"/>
</dbReference>
<dbReference type="FunFam" id="3.30.160.60:FF:000632">
    <property type="entry name" value="zinc finger protein 24 isoform X1"/>
    <property type="match status" value="1"/>
</dbReference>
<dbReference type="FunFam" id="1.10.4020.10:FF:000001">
    <property type="entry name" value="zinc finger protein 263 isoform X1"/>
    <property type="match status" value="1"/>
</dbReference>
<dbReference type="FunFam" id="3.30.160.60:FF:002343">
    <property type="entry name" value="Zinc finger protein 33A"/>
    <property type="match status" value="1"/>
</dbReference>
<dbReference type="FunFam" id="3.30.160.60:FF:001014">
    <property type="entry name" value="Zinc finger protein 597"/>
    <property type="match status" value="1"/>
</dbReference>
<dbReference type="Gene3D" id="3.30.160.60">
    <property type="entry name" value="Classic Zinc Finger"/>
    <property type="match status" value="4"/>
</dbReference>
<dbReference type="Gene3D" id="1.10.4020.10">
    <property type="entry name" value="DNA breaking-rejoining enzymes"/>
    <property type="match status" value="1"/>
</dbReference>
<dbReference type="InterPro" id="IPR003309">
    <property type="entry name" value="SCAN_dom"/>
</dbReference>
<dbReference type="InterPro" id="IPR038269">
    <property type="entry name" value="SCAN_sf"/>
</dbReference>
<dbReference type="InterPro" id="IPR036236">
    <property type="entry name" value="Znf_C2H2_sf"/>
</dbReference>
<dbReference type="InterPro" id="IPR013087">
    <property type="entry name" value="Znf_C2H2_type"/>
</dbReference>
<dbReference type="PANTHER" id="PTHR23226">
    <property type="entry name" value="ZINC FINGER AND SCAN DOMAIN-CONTAINING"/>
    <property type="match status" value="1"/>
</dbReference>
<dbReference type="PANTHER" id="PTHR23226:SF52">
    <property type="entry name" value="ZINC FINGER AND SCAN DOMAIN-CONTAINING PROTEIN 16"/>
    <property type="match status" value="1"/>
</dbReference>
<dbReference type="Pfam" id="PF02023">
    <property type="entry name" value="SCAN"/>
    <property type="match status" value="1"/>
</dbReference>
<dbReference type="Pfam" id="PF00096">
    <property type="entry name" value="zf-C2H2"/>
    <property type="match status" value="4"/>
</dbReference>
<dbReference type="SMART" id="SM00431">
    <property type="entry name" value="SCAN"/>
    <property type="match status" value="1"/>
</dbReference>
<dbReference type="SMART" id="SM00355">
    <property type="entry name" value="ZnF_C2H2"/>
    <property type="match status" value="4"/>
</dbReference>
<dbReference type="SUPFAM" id="SSF57667">
    <property type="entry name" value="beta-beta-alpha zinc fingers"/>
    <property type="match status" value="2"/>
</dbReference>
<dbReference type="SUPFAM" id="SSF47353">
    <property type="entry name" value="Retrovirus capsid dimerization domain-like"/>
    <property type="match status" value="1"/>
</dbReference>
<dbReference type="PROSITE" id="PS50804">
    <property type="entry name" value="SCAN_BOX"/>
    <property type="match status" value="1"/>
</dbReference>
<dbReference type="PROSITE" id="PS00028">
    <property type="entry name" value="ZINC_FINGER_C2H2_1"/>
    <property type="match status" value="4"/>
</dbReference>
<dbReference type="PROSITE" id="PS50157">
    <property type="entry name" value="ZINC_FINGER_C2H2_2"/>
    <property type="match status" value="4"/>
</dbReference>
<protein>
    <recommendedName>
        <fullName>Zinc finger and SCAN domain-containing protein 16</fullName>
    </recommendedName>
    <alternativeName>
        <fullName>Zinc finger protein 392</fullName>
    </alternativeName>
    <alternativeName>
        <fullName>Zinc finger protein 435</fullName>
    </alternativeName>
</protein>
<evidence type="ECO:0000255" key="1">
    <source>
        <dbReference type="PROSITE-ProRule" id="PRU00042"/>
    </source>
</evidence>
<evidence type="ECO:0000255" key="2">
    <source>
        <dbReference type="PROSITE-ProRule" id="PRU00187"/>
    </source>
</evidence>
<evidence type="ECO:0000256" key="3">
    <source>
        <dbReference type="SAM" id="MobiDB-lite"/>
    </source>
</evidence>
<evidence type="ECO:0000269" key="4">
    <source>
    </source>
</evidence>
<evidence type="ECO:0000305" key="5"/>
<evidence type="ECO:0007829" key="6">
    <source>
        <dbReference type="PDB" id="2COT"/>
    </source>
</evidence>
<accession>Q9H4T2</accession>
<accession>Q9H6K2</accession>
<feature type="chain" id="PRO_0000047583" description="Zinc finger and SCAN domain-containing protein 16">
    <location>
        <begin position="1"/>
        <end position="348"/>
    </location>
</feature>
<feature type="domain" description="SCAN box" evidence="2">
    <location>
        <begin position="41"/>
        <end position="123"/>
    </location>
</feature>
<feature type="zinc finger region" description="C2H2-type 1" evidence="1">
    <location>
        <begin position="236"/>
        <end position="258"/>
    </location>
</feature>
<feature type="zinc finger region" description="C2H2-type 2" evidence="1">
    <location>
        <begin position="264"/>
        <end position="286"/>
    </location>
</feature>
<feature type="zinc finger region" description="C2H2-type 3" evidence="1">
    <location>
        <begin position="292"/>
        <end position="314"/>
    </location>
</feature>
<feature type="zinc finger region" description="C2H2-type 4" evidence="1">
    <location>
        <begin position="320"/>
        <end position="342"/>
    </location>
</feature>
<feature type="region of interest" description="Disordered" evidence="3">
    <location>
        <begin position="160"/>
        <end position="184"/>
    </location>
</feature>
<feature type="region of interest" description="Disordered" evidence="3">
    <location>
        <begin position="205"/>
        <end position="226"/>
    </location>
</feature>
<feature type="compositionally biased region" description="Basic and acidic residues" evidence="3">
    <location>
        <begin position="163"/>
        <end position="184"/>
    </location>
</feature>
<feature type="sequence variant" id="VAR_035604" description="In a colorectal cancer sample; somatic mutation; dbSNP:rs750071607." evidence="4">
    <original>R</original>
    <variation>Q</variation>
    <location>
        <position position="137"/>
    </location>
</feature>
<feature type="strand" evidence="6">
    <location>
        <begin position="235"/>
        <end position="237"/>
    </location>
</feature>
<feature type="strand" evidence="6">
    <location>
        <begin position="239"/>
        <end position="241"/>
    </location>
</feature>
<feature type="helix" evidence="6">
    <location>
        <begin position="248"/>
        <end position="255"/>
    </location>
</feature>
<feature type="turn" evidence="6">
    <location>
        <begin position="256"/>
        <end position="258"/>
    </location>
</feature>
<feature type="strand" evidence="6">
    <location>
        <begin position="263"/>
        <end position="265"/>
    </location>
</feature>
<feature type="strand" evidence="6">
    <location>
        <begin position="267"/>
        <end position="269"/>
    </location>
</feature>
<feature type="strand" evidence="6">
    <location>
        <begin position="272"/>
        <end position="275"/>
    </location>
</feature>
<feature type="helix" evidence="6">
    <location>
        <begin position="276"/>
        <end position="282"/>
    </location>
</feature>
<feature type="helix" evidence="6">
    <location>
        <begin position="283"/>
        <end position="285"/>
    </location>
</feature>
<sequence>MTTALEPEDQKGLLIIKAEDHYWGQDSSSQKCSPHRRELYRQHFRKLCYQDAPGPREALTQLWELCRQWLRPECHTKEQILDLLVLEQFLSILPKDLQAWVRAHHPETGEEAVTVLEDLERELDEPGKQVPGNSERRDILMDKLAPLGRPYESLTVQLHPKKTQLEQEAGKPQRNGDKTRTKNEELFQKEDMPKDKEFLGEINDRLNKDTPQHPKSKDIIENEGRSEWQQRERRRYKCDECGKSFSHSSDLSKHRRTHTGEKPYKCDECGKAFIQRSHLIGHHRVHTGVKPYKCKECGKDFSGRTGLIQHQRIHTGEKPYECDECGRPFRVSSALIRHQRIHTANKLY</sequence>
<gene>
    <name type="primary">ZSCAN16</name>
    <name type="synonym">ZNF392</name>
    <name type="synonym">ZNF435</name>
</gene>
<reference key="1">
    <citation type="journal article" date="2004" name="Nat. Genet.">
        <title>Complete sequencing and characterization of 21,243 full-length human cDNAs.</title>
        <authorList>
            <person name="Ota T."/>
            <person name="Suzuki Y."/>
            <person name="Nishikawa T."/>
            <person name="Otsuki T."/>
            <person name="Sugiyama T."/>
            <person name="Irie R."/>
            <person name="Wakamatsu A."/>
            <person name="Hayashi K."/>
            <person name="Sato H."/>
            <person name="Nagai K."/>
            <person name="Kimura K."/>
            <person name="Makita H."/>
            <person name="Sekine M."/>
            <person name="Obayashi M."/>
            <person name="Nishi T."/>
            <person name="Shibahara T."/>
            <person name="Tanaka T."/>
            <person name="Ishii S."/>
            <person name="Yamamoto J."/>
            <person name="Saito K."/>
            <person name="Kawai Y."/>
            <person name="Isono Y."/>
            <person name="Nakamura Y."/>
            <person name="Nagahari K."/>
            <person name="Murakami K."/>
            <person name="Yasuda T."/>
            <person name="Iwayanagi T."/>
            <person name="Wagatsuma M."/>
            <person name="Shiratori A."/>
            <person name="Sudo H."/>
            <person name="Hosoiri T."/>
            <person name="Kaku Y."/>
            <person name="Kodaira H."/>
            <person name="Kondo H."/>
            <person name="Sugawara M."/>
            <person name="Takahashi M."/>
            <person name="Kanda K."/>
            <person name="Yokoi T."/>
            <person name="Furuya T."/>
            <person name="Kikkawa E."/>
            <person name="Omura Y."/>
            <person name="Abe K."/>
            <person name="Kamihara K."/>
            <person name="Katsuta N."/>
            <person name="Sato K."/>
            <person name="Tanikawa M."/>
            <person name="Yamazaki M."/>
            <person name="Ninomiya K."/>
            <person name="Ishibashi T."/>
            <person name="Yamashita H."/>
            <person name="Murakawa K."/>
            <person name="Fujimori K."/>
            <person name="Tanai H."/>
            <person name="Kimata M."/>
            <person name="Watanabe M."/>
            <person name="Hiraoka S."/>
            <person name="Chiba Y."/>
            <person name="Ishida S."/>
            <person name="Ono Y."/>
            <person name="Takiguchi S."/>
            <person name="Watanabe S."/>
            <person name="Yosida M."/>
            <person name="Hotuta T."/>
            <person name="Kusano J."/>
            <person name="Kanehori K."/>
            <person name="Takahashi-Fujii A."/>
            <person name="Hara H."/>
            <person name="Tanase T.-O."/>
            <person name="Nomura Y."/>
            <person name="Togiya S."/>
            <person name="Komai F."/>
            <person name="Hara R."/>
            <person name="Takeuchi K."/>
            <person name="Arita M."/>
            <person name="Imose N."/>
            <person name="Musashino K."/>
            <person name="Yuuki H."/>
            <person name="Oshima A."/>
            <person name="Sasaki N."/>
            <person name="Aotsuka S."/>
            <person name="Yoshikawa Y."/>
            <person name="Matsunawa H."/>
            <person name="Ichihara T."/>
            <person name="Shiohata N."/>
            <person name="Sano S."/>
            <person name="Moriya S."/>
            <person name="Momiyama H."/>
            <person name="Satoh N."/>
            <person name="Takami S."/>
            <person name="Terashima Y."/>
            <person name="Suzuki O."/>
            <person name="Nakagawa S."/>
            <person name="Senoh A."/>
            <person name="Mizoguchi H."/>
            <person name="Goto Y."/>
            <person name="Shimizu F."/>
            <person name="Wakebe H."/>
            <person name="Hishigaki H."/>
            <person name="Watanabe T."/>
            <person name="Sugiyama A."/>
            <person name="Takemoto M."/>
            <person name="Kawakami B."/>
            <person name="Yamazaki M."/>
            <person name="Watanabe K."/>
            <person name="Kumagai A."/>
            <person name="Itakura S."/>
            <person name="Fukuzumi Y."/>
            <person name="Fujimori Y."/>
            <person name="Komiyama M."/>
            <person name="Tashiro H."/>
            <person name="Tanigami A."/>
            <person name="Fujiwara T."/>
            <person name="Ono T."/>
            <person name="Yamada K."/>
            <person name="Fujii Y."/>
            <person name="Ozaki K."/>
            <person name="Hirao M."/>
            <person name="Ohmori Y."/>
            <person name="Kawabata A."/>
            <person name="Hikiji T."/>
            <person name="Kobatake N."/>
            <person name="Inagaki H."/>
            <person name="Ikema Y."/>
            <person name="Okamoto S."/>
            <person name="Okitani R."/>
            <person name="Kawakami T."/>
            <person name="Noguchi S."/>
            <person name="Itoh T."/>
            <person name="Shigeta K."/>
            <person name="Senba T."/>
            <person name="Matsumura K."/>
            <person name="Nakajima Y."/>
            <person name="Mizuno T."/>
            <person name="Morinaga M."/>
            <person name="Sasaki M."/>
            <person name="Togashi T."/>
            <person name="Oyama M."/>
            <person name="Hata H."/>
            <person name="Watanabe M."/>
            <person name="Komatsu T."/>
            <person name="Mizushima-Sugano J."/>
            <person name="Satoh T."/>
            <person name="Shirai Y."/>
            <person name="Takahashi Y."/>
            <person name="Nakagawa K."/>
            <person name="Okumura K."/>
            <person name="Nagase T."/>
            <person name="Nomura N."/>
            <person name="Kikuchi H."/>
            <person name="Masuho Y."/>
            <person name="Yamashita R."/>
            <person name="Nakai K."/>
            <person name="Yada T."/>
            <person name="Nakamura Y."/>
            <person name="Ohara O."/>
            <person name="Isogai T."/>
            <person name="Sugano S."/>
        </authorList>
    </citation>
    <scope>NUCLEOTIDE SEQUENCE [LARGE SCALE MRNA]</scope>
</reference>
<reference key="2">
    <citation type="journal article" date="2003" name="Nature">
        <title>The DNA sequence and analysis of human chromosome 6.</title>
        <authorList>
            <person name="Mungall A.J."/>
            <person name="Palmer S.A."/>
            <person name="Sims S.K."/>
            <person name="Edwards C.A."/>
            <person name="Ashurst J.L."/>
            <person name="Wilming L."/>
            <person name="Jones M.C."/>
            <person name="Horton R."/>
            <person name="Hunt S.E."/>
            <person name="Scott C.E."/>
            <person name="Gilbert J.G.R."/>
            <person name="Clamp M.E."/>
            <person name="Bethel G."/>
            <person name="Milne S."/>
            <person name="Ainscough R."/>
            <person name="Almeida J.P."/>
            <person name="Ambrose K.D."/>
            <person name="Andrews T.D."/>
            <person name="Ashwell R.I.S."/>
            <person name="Babbage A.K."/>
            <person name="Bagguley C.L."/>
            <person name="Bailey J."/>
            <person name="Banerjee R."/>
            <person name="Barker D.J."/>
            <person name="Barlow K.F."/>
            <person name="Bates K."/>
            <person name="Beare D.M."/>
            <person name="Beasley H."/>
            <person name="Beasley O."/>
            <person name="Bird C.P."/>
            <person name="Blakey S.E."/>
            <person name="Bray-Allen S."/>
            <person name="Brook J."/>
            <person name="Brown A.J."/>
            <person name="Brown J.Y."/>
            <person name="Burford D.C."/>
            <person name="Burrill W."/>
            <person name="Burton J."/>
            <person name="Carder C."/>
            <person name="Carter N.P."/>
            <person name="Chapman J.C."/>
            <person name="Clark S.Y."/>
            <person name="Clark G."/>
            <person name="Clee C.M."/>
            <person name="Clegg S."/>
            <person name="Cobley V."/>
            <person name="Collier R.E."/>
            <person name="Collins J.E."/>
            <person name="Colman L.K."/>
            <person name="Corby N.R."/>
            <person name="Coville G.J."/>
            <person name="Culley K.M."/>
            <person name="Dhami P."/>
            <person name="Davies J."/>
            <person name="Dunn M."/>
            <person name="Earthrowl M.E."/>
            <person name="Ellington A.E."/>
            <person name="Evans K.A."/>
            <person name="Faulkner L."/>
            <person name="Francis M.D."/>
            <person name="Frankish A."/>
            <person name="Frankland J."/>
            <person name="French L."/>
            <person name="Garner P."/>
            <person name="Garnett J."/>
            <person name="Ghori M.J."/>
            <person name="Gilby L.M."/>
            <person name="Gillson C.J."/>
            <person name="Glithero R.J."/>
            <person name="Grafham D.V."/>
            <person name="Grant M."/>
            <person name="Gribble S."/>
            <person name="Griffiths C."/>
            <person name="Griffiths M.N.D."/>
            <person name="Hall R."/>
            <person name="Halls K.S."/>
            <person name="Hammond S."/>
            <person name="Harley J.L."/>
            <person name="Hart E.A."/>
            <person name="Heath P.D."/>
            <person name="Heathcott R."/>
            <person name="Holmes S.J."/>
            <person name="Howden P.J."/>
            <person name="Howe K.L."/>
            <person name="Howell G.R."/>
            <person name="Huckle E."/>
            <person name="Humphray S.J."/>
            <person name="Humphries M.D."/>
            <person name="Hunt A.R."/>
            <person name="Johnson C.M."/>
            <person name="Joy A.A."/>
            <person name="Kay M."/>
            <person name="Keenan S.J."/>
            <person name="Kimberley A.M."/>
            <person name="King A."/>
            <person name="Laird G.K."/>
            <person name="Langford C."/>
            <person name="Lawlor S."/>
            <person name="Leongamornlert D.A."/>
            <person name="Leversha M."/>
            <person name="Lloyd C.R."/>
            <person name="Lloyd D.M."/>
            <person name="Loveland J.E."/>
            <person name="Lovell J."/>
            <person name="Martin S."/>
            <person name="Mashreghi-Mohammadi M."/>
            <person name="Maslen G.L."/>
            <person name="Matthews L."/>
            <person name="McCann O.T."/>
            <person name="McLaren S.J."/>
            <person name="McLay K."/>
            <person name="McMurray A."/>
            <person name="Moore M.J.F."/>
            <person name="Mullikin J.C."/>
            <person name="Niblett D."/>
            <person name="Nickerson T."/>
            <person name="Novik K.L."/>
            <person name="Oliver K."/>
            <person name="Overton-Larty E.K."/>
            <person name="Parker A."/>
            <person name="Patel R."/>
            <person name="Pearce A.V."/>
            <person name="Peck A.I."/>
            <person name="Phillimore B.J.C.T."/>
            <person name="Phillips S."/>
            <person name="Plumb R.W."/>
            <person name="Porter K.M."/>
            <person name="Ramsey Y."/>
            <person name="Ranby S.A."/>
            <person name="Rice C.M."/>
            <person name="Ross M.T."/>
            <person name="Searle S.M."/>
            <person name="Sehra H.K."/>
            <person name="Sheridan E."/>
            <person name="Skuce C.D."/>
            <person name="Smith S."/>
            <person name="Smith M."/>
            <person name="Spraggon L."/>
            <person name="Squares S.L."/>
            <person name="Steward C.A."/>
            <person name="Sycamore N."/>
            <person name="Tamlyn-Hall G."/>
            <person name="Tester J."/>
            <person name="Theaker A.J."/>
            <person name="Thomas D.W."/>
            <person name="Thorpe A."/>
            <person name="Tracey A."/>
            <person name="Tromans A."/>
            <person name="Tubby B."/>
            <person name="Wall M."/>
            <person name="Wallis J.M."/>
            <person name="West A.P."/>
            <person name="White S.S."/>
            <person name="Whitehead S.L."/>
            <person name="Whittaker H."/>
            <person name="Wild A."/>
            <person name="Willey D.J."/>
            <person name="Wilmer T.E."/>
            <person name="Wood J.M."/>
            <person name="Wray P.W."/>
            <person name="Wyatt J.C."/>
            <person name="Young L."/>
            <person name="Younger R.M."/>
            <person name="Bentley D.R."/>
            <person name="Coulson A."/>
            <person name="Durbin R.M."/>
            <person name="Hubbard T."/>
            <person name="Sulston J.E."/>
            <person name="Dunham I."/>
            <person name="Rogers J."/>
            <person name="Beck S."/>
        </authorList>
    </citation>
    <scope>NUCLEOTIDE SEQUENCE [LARGE SCALE GENOMIC DNA]</scope>
</reference>
<reference key="3">
    <citation type="journal article" date="2004" name="Genome Res.">
        <title>The status, quality, and expansion of the NIH full-length cDNA project: the Mammalian Gene Collection (MGC).</title>
        <authorList>
            <consortium name="The MGC Project Team"/>
        </authorList>
    </citation>
    <scope>NUCLEOTIDE SEQUENCE [LARGE SCALE MRNA]</scope>
    <source>
        <tissue>Uterus</tissue>
    </source>
</reference>
<reference key="4">
    <citation type="submission" date="2005-11" db="PDB data bank">
        <title>Solution structure of the first and second ZF-C2H2 domains of zinc finger protein 435.</title>
        <authorList>
            <consortium name="RIKEN structural genomics initiative (RSGI)"/>
        </authorList>
    </citation>
    <scope>STRUCTURE BY NMR OF 224-288</scope>
</reference>
<reference key="5">
    <citation type="journal article" date="2006" name="Science">
        <title>The consensus coding sequences of human breast and colorectal cancers.</title>
        <authorList>
            <person name="Sjoeblom T."/>
            <person name="Jones S."/>
            <person name="Wood L.D."/>
            <person name="Parsons D.W."/>
            <person name="Lin J."/>
            <person name="Barber T.D."/>
            <person name="Mandelker D."/>
            <person name="Leary R.J."/>
            <person name="Ptak J."/>
            <person name="Silliman N."/>
            <person name="Szabo S."/>
            <person name="Buckhaults P."/>
            <person name="Farrell C."/>
            <person name="Meeh P."/>
            <person name="Markowitz S.D."/>
            <person name="Willis J."/>
            <person name="Dawson D."/>
            <person name="Willson J.K.V."/>
            <person name="Gazdar A.F."/>
            <person name="Hartigan J."/>
            <person name="Wu L."/>
            <person name="Liu C."/>
            <person name="Parmigiani G."/>
            <person name="Park B.H."/>
            <person name="Bachman K.E."/>
            <person name="Papadopoulos N."/>
            <person name="Vogelstein B."/>
            <person name="Kinzler K.W."/>
            <person name="Velculescu V.E."/>
        </authorList>
    </citation>
    <scope>VARIANT [LARGE SCALE ANALYSIS] GLN-137</scope>
</reference>
<comment type="function">
    <text>May be involved in transcriptional regulation.</text>
</comment>
<comment type="interaction">
    <interactant intactId="EBI-723596">
        <id>Q9H4T2</id>
    </interactant>
    <interactant intactId="EBI-541426">
        <id>Q9BXS5</id>
        <label>AP1M1</label>
    </interactant>
    <organismsDiffer>false</organismsDiffer>
    <experiments>3</experiments>
</comment>
<comment type="interaction">
    <interactant intactId="EBI-723596">
        <id>Q9H4T2</id>
    </interactant>
    <interactant intactId="EBI-741158">
        <id>Q96HA8</id>
        <label>NTAQ1</label>
    </interactant>
    <organismsDiffer>false</organismsDiffer>
    <experiments>3</experiments>
</comment>
<comment type="interaction">
    <interactant intactId="EBI-723596">
        <id>Q9H4T2</id>
    </interactant>
    <interactant intactId="EBI-368321">
        <id>O60437</id>
        <label>PPL</label>
    </interactant>
    <organismsDiffer>false</organismsDiffer>
    <experiments>3</experiments>
</comment>
<comment type="interaction">
    <interactant intactId="EBI-723596">
        <id>Q9H4T2</id>
    </interactant>
    <interactant intactId="EBI-745846">
        <id>P57086</id>
        <label>SCAND1</label>
    </interactant>
    <organismsDiffer>false</organismsDiffer>
    <experiments>3</experiments>
</comment>
<comment type="interaction">
    <interactant intactId="EBI-723596">
        <id>Q9H4T2</id>
    </interactant>
    <interactant intactId="EBI-5235340">
        <id>Q7Z699</id>
        <label>SPRED1</label>
    </interactant>
    <organismsDiffer>false</organismsDiffer>
    <experiments>3</experiments>
</comment>
<comment type="interaction">
    <interactant intactId="EBI-723596">
        <id>Q9H4T2</id>
    </interactant>
    <interactant intactId="EBI-725997">
        <id>Q8WV44</id>
        <label>TRIM41</label>
    </interactant>
    <organismsDiffer>false</organismsDiffer>
    <experiments>3</experiments>
</comment>
<comment type="interaction">
    <interactant intactId="EBI-723596">
        <id>Q9H4T2</id>
    </interactant>
    <interactant intactId="EBI-707773">
        <id>P17028</id>
        <label>ZNF24</label>
    </interactant>
    <organismsDiffer>false</organismsDiffer>
    <experiments>3</experiments>
</comment>
<comment type="interaction">
    <interactant intactId="EBI-723596">
        <id>Q9H4T2</id>
    </interactant>
    <interactant intactId="EBI-740232">
        <id>Q9NWS9-2</id>
        <label>ZNF446</label>
    </interactant>
    <organismsDiffer>false</organismsDiffer>
    <experiments>10</experiments>
</comment>
<comment type="interaction">
    <interactant intactId="EBI-723596">
        <id>Q9H4T2</id>
    </interactant>
    <interactant intactId="EBI-10178224">
        <id>P10073</id>
        <label>ZSCAN22</label>
    </interactant>
    <organismsDiffer>false</organismsDiffer>
    <experiments>6</experiments>
</comment>
<comment type="subcellular location">
    <subcellularLocation>
        <location evidence="5">Nucleus</location>
    </subcellularLocation>
</comment>
<comment type="similarity">
    <text evidence="5">Belongs to the krueppel C2H2-type zinc-finger protein family.</text>
</comment>
<organism>
    <name type="scientific">Homo sapiens</name>
    <name type="common">Human</name>
    <dbReference type="NCBI Taxonomy" id="9606"/>
    <lineage>
        <taxon>Eukaryota</taxon>
        <taxon>Metazoa</taxon>
        <taxon>Chordata</taxon>
        <taxon>Craniata</taxon>
        <taxon>Vertebrata</taxon>
        <taxon>Euteleostomi</taxon>
        <taxon>Mammalia</taxon>
        <taxon>Eutheria</taxon>
        <taxon>Euarchontoglires</taxon>
        <taxon>Primates</taxon>
        <taxon>Haplorrhini</taxon>
        <taxon>Catarrhini</taxon>
        <taxon>Hominidae</taxon>
        <taxon>Homo</taxon>
    </lineage>
</organism>
<proteinExistence type="evidence at protein level"/>
<name>ZSC16_HUMAN</name>